<protein>
    <recommendedName>
        <fullName>Superoxide dismutase [Mn], mitochondrial</fullName>
        <ecNumber>1.15.1.1</ecNumber>
    </recommendedName>
</protein>
<sequence length="198" mass="22204">KHSLPDLPYDYGALEPHINAQIMQLHHSKHHAAYVNNLNVTEEKYQEALAKGDVTAQIALQPALKFNGGGHINHSIFWTNLSPNGGGEPKGELLEAIKRDFGSFDKFKEKLTAASVGVQGSGWGWLGFNKERGHLQIAACPNQDPLQGTTGLIPLLGIDVWEHAYYLQYKNVRPDYLKAIWNVINWENVTERYMACKK</sequence>
<comment type="function">
    <text evidence="3">Destroys superoxide anion radicals which are normally produced within the cells and which are toxic to biological systems.</text>
</comment>
<comment type="catalytic activity">
    <reaction>
        <text>2 superoxide + 2 H(+) = H2O2 + O2</text>
        <dbReference type="Rhea" id="RHEA:20696"/>
        <dbReference type="ChEBI" id="CHEBI:15378"/>
        <dbReference type="ChEBI" id="CHEBI:15379"/>
        <dbReference type="ChEBI" id="CHEBI:16240"/>
        <dbReference type="ChEBI" id="CHEBI:18421"/>
        <dbReference type="EC" id="1.15.1.1"/>
    </reaction>
</comment>
<comment type="cofactor">
    <cofactor evidence="2">
        <name>Mn(2+)</name>
        <dbReference type="ChEBI" id="CHEBI:29035"/>
    </cofactor>
    <text evidence="2">Binds 1 Mn(2+) ion per subunit.</text>
</comment>
<comment type="subunit">
    <text evidence="1">Homotetramer.</text>
</comment>
<comment type="subcellular location">
    <subcellularLocation>
        <location evidence="1">Mitochondrion matrix</location>
    </subcellularLocation>
</comment>
<comment type="PTM">
    <text evidence="3">Nitrated under oxidative stress. Nitration coupled with oxidation inhibits the catalytic activity.</text>
</comment>
<comment type="PTM">
    <text evidence="2">Acetylation at Lys-98 decreases enzymatic activity. Deacetylated by SIRT3 upon exposure to ionizing radiations or after long fasting (By similarity).</text>
</comment>
<comment type="PTM">
    <text evidence="2">Polyubiquitinated; leading to proteasomal degradation. Deubiquitinated by USP36 which increases protein stability.</text>
</comment>
<comment type="similarity">
    <text evidence="5">Belongs to the iron/manganese superoxide dismutase family.</text>
</comment>
<comment type="sequence caution" evidence="5">
    <conflict type="erroneous initiation">
        <sequence resource="EMBL-CDS" id="BAC20353"/>
    </conflict>
    <text>Extended N-terminus.</text>
</comment>
<feature type="chain" id="PRO_0000159956" description="Superoxide dismutase [Mn], mitochondrial">
    <location>
        <begin position="1"/>
        <end position="198"/>
    </location>
</feature>
<feature type="binding site" evidence="1">
    <location>
        <position position="26"/>
    </location>
    <ligand>
        <name>Mn(2+)</name>
        <dbReference type="ChEBI" id="CHEBI:29035"/>
    </ligand>
</feature>
<feature type="binding site" evidence="1">
    <location>
        <position position="74"/>
    </location>
    <ligand>
        <name>Mn(2+)</name>
        <dbReference type="ChEBI" id="CHEBI:29035"/>
    </ligand>
</feature>
<feature type="binding site" evidence="1">
    <location>
        <position position="159"/>
    </location>
    <ligand>
        <name>Mn(2+)</name>
        <dbReference type="ChEBI" id="CHEBI:29035"/>
    </ligand>
</feature>
<feature type="binding site" evidence="1">
    <location>
        <position position="163"/>
    </location>
    <ligand>
        <name>Mn(2+)</name>
        <dbReference type="ChEBI" id="CHEBI:29035"/>
    </ligand>
</feature>
<feature type="modified residue" description="3'-nitrotyrosine" evidence="2">
    <location>
        <position position="34"/>
    </location>
</feature>
<feature type="modified residue" description="N6-acetyllysine; alternate" evidence="2">
    <location>
        <position position="44"/>
    </location>
</feature>
<feature type="modified residue" description="N6-succinyllysine; alternate" evidence="4">
    <location>
        <position position="44"/>
    </location>
</feature>
<feature type="modified residue" description="N6-acetyllysine; alternate" evidence="4">
    <location>
        <position position="51"/>
    </location>
</feature>
<feature type="modified residue" description="N6-succinyllysine; alternate" evidence="4">
    <location>
        <position position="51"/>
    </location>
</feature>
<feature type="modified residue" description="N6-acetyllysine" evidence="4">
    <location>
        <position position="90"/>
    </location>
</feature>
<feature type="modified residue" description="N6-acetyllysine; alternate" evidence="4">
    <location>
        <position position="98"/>
    </location>
</feature>
<feature type="modified residue" description="N6-succinyllysine; alternate" evidence="4">
    <location>
        <position position="98"/>
    </location>
</feature>
<feature type="modified residue" description="N6-acetyllysine; alternate" evidence="2">
    <location>
        <position position="106"/>
    </location>
</feature>
<feature type="modified residue" description="N6-succinyllysine; alternate" evidence="4">
    <location>
        <position position="106"/>
    </location>
</feature>
<feature type="modified residue" description="N6-acetyllysine" evidence="4">
    <location>
        <position position="178"/>
    </location>
</feature>
<accession>Q8HXP7</accession>
<proteinExistence type="evidence at transcript level"/>
<keyword id="KW-0007">Acetylation</keyword>
<keyword id="KW-0464">Manganese</keyword>
<keyword id="KW-0479">Metal-binding</keyword>
<keyword id="KW-0496">Mitochondrion</keyword>
<keyword id="KW-0944">Nitration</keyword>
<keyword id="KW-0560">Oxidoreductase</keyword>
<keyword id="KW-1185">Reference proteome</keyword>
<keyword id="KW-0832">Ubl conjugation</keyword>
<name>SODM_PANTR</name>
<organism>
    <name type="scientific">Pan troglodytes</name>
    <name type="common">Chimpanzee</name>
    <dbReference type="NCBI Taxonomy" id="9598"/>
    <lineage>
        <taxon>Eukaryota</taxon>
        <taxon>Metazoa</taxon>
        <taxon>Chordata</taxon>
        <taxon>Craniata</taxon>
        <taxon>Vertebrata</taxon>
        <taxon>Euteleostomi</taxon>
        <taxon>Mammalia</taxon>
        <taxon>Eutheria</taxon>
        <taxon>Euarchontoglires</taxon>
        <taxon>Primates</taxon>
        <taxon>Haplorrhini</taxon>
        <taxon>Catarrhini</taxon>
        <taxon>Hominidae</taxon>
        <taxon>Pan</taxon>
    </lineage>
</organism>
<evidence type="ECO:0000250" key="1"/>
<evidence type="ECO:0000250" key="2">
    <source>
        <dbReference type="UniProtKB" id="P04179"/>
    </source>
</evidence>
<evidence type="ECO:0000250" key="3">
    <source>
        <dbReference type="UniProtKB" id="P07895"/>
    </source>
</evidence>
<evidence type="ECO:0000250" key="4">
    <source>
        <dbReference type="UniProtKB" id="P09671"/>
    </source>
</evidence>
<evidence type="ECO:0000305" key="5"/>
<reference key="1">
    <citation type="journal article" date="2002" name="Gene">
        <title>Structure, molecular evolution, and gene expression of primate superoxide dismutases.</title>
        <authorList>
            <person name="Fukuhara R."/>
            <person name="Tezuka T."/>
            <person name="Kageyama T."/>
        </authorList>
    </citation>
    <scope>NUCLEOTIDE SEQUENCE [MRNA]</scope>
</reference>
<dbReference type="EC" id="1.15.1.1"/>
<dbReference type="EMBL" id="AB087274">
    <property type="protein sequence ID" value="BAC20353.1"/>
    <property type="status" value="ALT_INIT"/>
    <property type="molecule type" value="mRNA"/>
</dbReference>
<dbReference type="RefSeq" id="NP_001009022.1">
    <property type="nucleotide sequence ID" value="NM_001009022.1"/>
</dbReference>
<dbReference type="SMR" id="Q8HXP7"/>
<dbReference type="STRING" id="9598.ENSPTRP00000083441"/>
<dbReference type="PaxDb" id="9598-ENSPTRP00000042459"/>
<dbReference type="GeneID" id="449634"/>
<dbReference type="KEGG" id="ptr:449634"/>
<dbReference type="CTD" id="6648"/>
<dbReference type="eggNOG" id="KOG0876">
    <property type="taxonomic scope" value="Eukaryota"/>
</dbReference>
<dbReference type="InParanoid" id="Q8HXP7"/>
<dbReference type="Proteomes" id="UP000002277">
    <property type="component" value="Unplaced"/>
</dbReference>
<dbReference type="GO" id="GO:0005759">
    <property type="term" value="C:mitochondrial matrix"/>
    <property type="evidence" value="ECO:0007669"/>
    <property type="project" value="UniProtKB-SubCell"/>
</dbReference>
<dbReference type="GO" id="GO:0005739">
    <property type="term" value="C:mitochondrion"/>
    <property type="evidence" value="ECO:0000318"/>
    <property type="project" value="GO_Central"/>
</dbReference>
<dbReference type="GO" id="GO:0030145">
    <property type="term" value="F:manganese ion binding"/>
    <property type="evidence" value="ECO:0000250"/>
    <property type="project" value="UniProtKB"/>
</dbReference>
<dbReference type="GO" id="GO:0004784">
    <property type="term" value="F:superoxide dismutase activity"/>
    <property type="evidence" value="ECO:0000250"/>
    <property type="project" value="UniProtKB"/>
</dbReference>
<dbReference type="FunFam" id="1.10.287.990:FF:000001">
    <property type="entry name" value="Superoxide dismutase"/>
    <property type="match status" value="1"/>
</dbReference>
<dbReference type="FunFam" id="3.55.40.20:FF:000003">
    <property type="entry name" value="Superoxide dismutase [Mn], mitochondrial"/>
    <property type="match status" value="1"/>
</dbReference>
<dbReference type="Gene3D" id="1.10.287.990">
    <property type="entry name" value="Fe,Mn superoxide dismutase (SOD) domain"/>
    <property type="match status" value="1"/>
</dbReference>
<dbReference type="Gene3D" id="3.55.40.20">
    <property type="entry name" value="Iron/manganese superoxide dismutase, C-terminal domain"/>
    <property type="match status" value="1"/>
</dbReference>
<dbReference type="InterPro" id="IPR050265">
    <property type="entry name" value="Fe/Mn_Superoxide_Dismutase"/>
</dbReference>
<dbReference type="InterPro" id="IPR001189">
    <property type="entry name" value="Mn/Fe_SOD"/>
</dbReference>
<dbReference type="InterPro" id="IPR019833">
    <property type="entry name" value="Mn/Fe_SOD_BS"/>
</dbReference>
<dbReference type="InterPro" id="IPR019832">
    <property type="entry name" value="Mn/Fe_SOD_C"/>
</dbReference>
<dbReference type="InterPro" id="IPR019831">
    <property type="entry name" value="Mn/Fe_SOD_N"/>
</dbReference>
<dbReference type="InterPro" id="IPR036324">
    <property type="entry name" value="Mn/Fe_SOD_N_sf"/>
</dbReference>
<dbReference type="InterPro" id="IPR036314">
    <property type="entry name" value="SOD_C_sf"/>
</dbReference>
<dbReference type="PANTHER" id="PTHR11404">
    <property type="entry name" value="SUPEROXIDE DISMUTASE 2"/>
    <property type="match status" value="1"/>
</dbReference>
<dbReference type="PANTHER" id="PTHR11404:SF6">
    <property type="entry name" value="SUPEROXIDE DISMUTASE [MN], MITOCHONDRIAL"/>
    <property type="match status" value="1"/>
</dbReference>
<dbReference type="Pfam" id="PF02777">
    <property type="entry name" value="Sod_Fe_C"/>
    <property type="match status" value="1"/>
</dbReference>
<dbReference type="Pfam" id="PF00081">
    <property type="entry name" value="Sod_Fe_N"/>
    <property type="match status" value="1"/>
</dbReference>
<dbReference type="PIRSF" id="PIRSF000349">
    <property type="entry name" value="SODismutase"/>
    <property type="match status" value="1"/>
</dbReference>
<dbReference type="PRINTS" id="PR01703">
    <property type="entry name" value="MNSODISMTASE"/>
</dbReference>
<dbReference type="SUPFAM" id="SSF54719">
    <property type="entry name" value="Fe,Mn superoxide dismutase (SOD), C-terminal domain"/>
    <property type="match status" value="1"/>
</dbReference>
<dbReference type="SUPFAM" id="SSF46609">
    <property type="entry name" value="Fe,Mn superoxide dismutase (SOD), N-terminal domain"/>
    <property type="match status" value="1"/>
</dbReference>
<dbReference type="PROSITE" id="PS00088">
    <property type="entry name" value="SOD_MN"/>
    <property type="match status" value="1"/>
</dbReference>
<gene>
    <name type="primary">SOD2</name>
</gene>